<accession>A5I4J3</accession>
<accession>A7G5P4</accession>
<sequence>MAKIRVYELAKELNISSKELITLLEEEFSVEVKNHMSAIEDEDANLIKELLSGKEKSEKTKEEDDEIETTAKNPIKESMNNKKSNKRDDKNEKVNTENAEDMGIITMTSDTITVKEISDKLEKSYAEVIKELMLMGVMASVNQEINFEMAEKLAAKFDMEILKEDEDEKEDLEDILKDNEEEEYLQKRSPIITVMGHVDHGKTSLLDAIRKSKVTSTEAGGITQHIGAYTVELNGEAITFLDTPGHAAFTAMRARGAQVTDIVILVVAADDGIMPQTQEAISHCKAANVPLIVAINKIDRPGANIDKVKQELTEYGLVAEDWGGDTICVPVSAHTKEGIDDLLEMILLSSEILELKANPNRKAKGTVVEAKLDKGRGPVATLLIQNGTLRVGDSIVVGSTYGRIRAMFNDKGRNIESAGPSTPVEILGLSEVPEAGDKFYQVKEEKTARGIADKRKEKIRDEYLQSTHKVSLEDLYNQIQEGTVKELGLIVKADVQGSVEALKQSLEKLSTEEVKVRVIHGGVGAINETDVTLATASNGIILGFNVRPDNNAIIASERDGVDIKTYRVIYDAIEDIKSAMLGMLEPEFKEVVIGTAEVRQVYKISSVGTIAGAYIQTGKLARNAGARVIRDGIVIFESELASLKRFKDDAKEVAQGYECGLSIEKFNDIKEGDIIECFIMEEIKKKTL</sequence>
<organism>
    <name type="scientific">Clostridium botulinum (strain Hall / ATCC 3502 / NCTC 13319 / Type A)</name>
    <dbReference type="NCBI Taxonomy" id="441771"/>
    <lineage>
        <taxon>Bacteria</taxon>
        <taxon>Bacillati</taxon>
        <taxon>Bacillota</taxon>
        <taxon>Clostridia</taxon>
        <taxon>Eubacteriales</taxon>
        <taxon>Clostridiaceae</taxon>
        <taxon>Clostridium</taxon>
    </lineage>
</organism>
<dbReference type="EMBL" id="CP000727">
    <property type="protein sequence ID" value="ABS37445.1"/>
    <property type="molecule type" value="Genomic_DNA"/>
</dbReference>
<dbReference type="EMBL" id="AM412317">
    <property type="protein sequence ID" value="CAL83965.1"/>
    <property type="molecule type" value="Genomic_DNA"/>
</dbReference>
<dbReference type="RefSeq" id="WP_003388357.1">
    <property type="nucleotide sequence ID" value="NC_009698.1"/>
</dbReference>
<dbReference type="RefSeq" id="YP_001254914.1">
    <property type="nucleotide sequence ID" value="NC_009495.1"/>
</dbReference>
<dbReference type="RefSeq" id="YP_001388109.1">
    <property type="nucleotide sequence ID" value="NC_009698.1"/>
</dbReference>
<dbReference type="SMR" id="A5I4J3"/>
<dbReference type="GeneID" id="5186673"/>
<dbReference type="KEGG" id="cbh:CLC_2265"/>
<dbReference type="KEGG" id="cbo:CBO2418"/>
<dbReference type="PATRIC" id="fig|413999.7.peg.2395"/>
<dbReference type="HOGENOM" id="CLU_006301_5_1_9"/>
<dbReference type="PRO" id="PR:A5I4J3"/>
<dbReference type="Proteomes" id="UP000001986">
    <property type="component" value="Chromosome"/>
</dbReference>
<dbReference type="GO" id="GO:0005737">
    <property type="term" value="C:cytoplasm"/>
    <property type="evidence" value="ECO:0000318"/>
    <property type="project" value="GO_Central"/>
</dbReference>
<dbReference type="GO" id="GO:0005525">
    <property type="term" value="F:GTP binding"/>
    <property type="evidence" value="ECO:0007669"/>
    <property type="project" value="UniProtKB-KW"/>
</dbReference>
<dbReference type="GO" id="GO:0003924">
    <property type="term" value="F:GTPase activity"/>
    <property type="evidence" value="ECO:0007669"/>
    <property type="project" value="UniProtKB-UniRule"/>
</dbReference>
<dbReference type="GO" id="GO:0003743">
    <property type="term" value="F:translation initiation factor activity"/>
    <property type="evidence" value="ECO:0007669"/>
    <property type="project" value="UniProtKB-UniRule"/>
</dbReference>
<dbReference type="GO" id="GO:0030488">
    <property type="term" value="P:tRNA methylation"/>
    <property type="evidence" value="ECO:0000318"/>
    <property type="project" value="GO_Central"/>
</dbReference>
<dbReference type="GO" id="GO:0002098">
    <property type="term" value="P:tRNA wobble uridine modification"/>
    <property type="evidence" value="ECO:0000318"/>
    <property type="project" value="GO_Central"/>
</dbReference>
<dbReference type="CDD" id="cd01887">
    <property type="entry name" value="IF2_eIF5B"/>
    <property type="match status" value="1"/>
</dbReference>
<dbReference type="CDD" id="cd03702">
    <property type="entry name" value="IF2_mtIF2_II"/>
    <property type="match status" value="1"/>
</dbReference>
<dbReference type="CDD" id="cd03692">
    <property type="entry name" value="mtIF2_IVc"/>
    <property type="match status" value="1"/>
</dbReference>
<dbReference type="FunFam" id="2.40.30.10:FF:000007">
    <property type="entry name" value="Translation initiation factor IF-2"/>
    <property type="match status" value="1"/>
</dbReference>
<dbReference type="FunFam" id="2.40.30.10:FF:000008">
    <property type="entry name" value="Translation initiation factor IF-2"/>
    <property type="match status" value="1"/>
</dbReference>
<dbReference type="FunFam" id="3.40.50.10050:FF:000001">
    <property type="entry name" value="Translation initiation factor IF-2"/>
    <property type="match status" value="1"/>
</dbReference>
<dbReference type="FunFam" id="3.40.50.300:FF:000019">
    <property type="entry name" value="Translation initiation factor IF-2"/>
    <property type="match status" value="1"/>
</dbReference>
<dbReference type="Gene3D" id="1.10.10.2480">
    <property type="match status" value="1"/>
</dbReference>
<dbReference type="Gene3D" id="3.40.50.300">
    <property type="entry name" value="P-loop containing nucleotide triphosphate hydrolases"/>
    <property type="match status" value="1"/>
</dbReference>
<dbReference type="Gene3D" id="2.40.30.10">
    <property type="entry name" value="Translation factors"/>
    <property type="match status" value="2"/>
</dbReference>
<dbReference type="Gene3D" id="3.40.50.10050">
    <property type="entry name" value="Translation initiation factor IF- 2, domain 3"/>
    <property type="match status" value="1"/>
</dbReference>
<dbReference type="HAMAP" id="MF_00100_B">
    <property type="entry name" value="IF_2_B"/>
    <property type="match status" value="1"/>
</dbReference>
<dbReference type="InterPro" id="IPR053905">
    <property type="entry name" value="EF-G-like_DII"/>
</dbReference>
<dbReference type="InterPro" id="IPR044145">
    <property type="entry name" value="IF2_II"/>
</dbReference>
<dbReference type="InterPro" id="IPR006847">
    <property type="entry name" value="IF2_N"/>
</dbReference>
<dbReference type="InterPro" id="IPR027417">
    <property type="entry name" value="P-loop_NTPase"/>
</dbReference>
<dbReference type="InterPro" id="IPR005225">
    <property type="entry name" value="Small_GTP-bd"/>
</dbReference>
<dbReference type="InterPro" id="IPR000795">
    <property type="entry name" value="T_Tr_GTP-bd_dom"/>
</dbReference>
<dbReference type="InterPro" id="IPR000178">
    <property type="entry name" value="TF_IF2_bacterial-like"/>
</dbReference>
<dbReference type="InterPro" id="IPR015760">
    <property type="entry name" value="TIF_IF2"/>
</dbReference>
<dbReference type="InterPro" id="IPR023115">
    <property type="entry name" value="TIF_IF2_dom3"/>
</dbReference>
<dbReference type="InterPro" id="IPR036925">
    <property type="entry name" value="TIF_IF2_dom3_sf"/>
</dbReference>
<dbReference type="InterPro" id="IPR009000">
    <property type="entry name" value="Transl_B-barrel_sf"/>
</dbReference>
<dbReference type="NCBIfam" id="TIGR00487">
    <property type="entry name" value="IF-2"/>
    <property type="match status" value="1"/>
</dbReference>
<dbReference type="NCBIfam" id="TIGR00231">
    <property type="entry name" value="small_GTP"/>
    <property type="match status" value="1"/>
</dbReference>
<dbReference type="PANTHER" id="PTHR43381:SF5">
    <property type="entry name" value="TR-TYPE G DOMAIN-CONTAINING PROTEIN"/>
    <property type="match status" value="1"/>
</dbReference>
<dbReference type="PANTHER" id="PTHR43381">
    <property type="entry name" value="TRANSLATION INITIATION FACTOR IF-2-RELATED"/>
    <property type="match status" value="1"/>
</dbReference>
<dbReference type="Pfam" id="PF22042">
    <property type="entry name" value="EF-G_D2"/>
    <property type="match status" value="1"/>
</dbReference>
<dbReference type="Pfam" id="PF00009">
    <property type="entry name" value="GTP_EFTU"/>
    <property type="match status" value="1"/>
</dbReference>
<dbReference type="Pfam" id="PF11987">
    <property type="entry name" value="IF-2"/>
    <property type="match status" value="1"/>
</dbReference>
<dbReference type="Pfam" id="PF04760">
    <property type="entry name" value="IF2_N"/>
    <property type="match status" value="2"/>
</dbReference>
<dbReference type="SUPFAM" id="SSF52156">
    <property type="entry name" value="Initiation factor IF2/eIF5b, domain 3"/>
    <property type="match status" value="1"/>
</dbReference>
<dbReference type="SUPFAM" id="SSF52540">
    <property type="entry name" value="P-loop containing nucleoside triphosphate hydrolases"/>
    <property type="match status" value="1"/>
</dbReference>
<dbReference type="SUPFAM" id="SSF50447">
    <property type="entry name" value="Translation proteins"/>
    <property type="match status" value="2"/>
</dbReference>
<dbReference type="PROSITE" id="PS51722">
    <property type="entry name" value="G_TR_2"/>
    <property type="match status" value="1"/>
</dbReference>
<dbReference type="PROSITE" id="PS01176">
    <property type="entry name" value="IF2"/>
    <property type="match status" value="1"/>
</dbReference>
<name>IF2_CLOBH</name>
<protein>
    <recommendedName>
        <fullName evidence="2">Translation initiation factor IF-2</fullName>
    </recommendedName>
</protein>
<proteinExistence type="inferred from homology"/>
<gene>
    <name evidence="2" type="primary">infB</name>
    <name type="ordered locus">CBO2418</name>
    <name type="ordered locus">CLC_2265</name>
</gene>
<comment type="function">
    <text evidence="2">One of the essential components for the initiation of protein synthesis. Protects formylmethionyl-tRNA from spontaneous hydrolysis and promotes its binding to the 30S ribosomal subunits. Also involved in the hydrolysis of GTP during the formation of the 70S ribosomal complex.</text>
</comment>
<comment type="subcellular location">
    <subcellularLocation>
        <location evidence="2">Cytoplasm</location>
    </subcellularLocation>
</comment>
<comment type="similarity">
    <text evidence="2">Belongs to the TRAFAC class translation factor GTPase superfamily. Classic translation factor GTPase family. IF-2 subfamily.</text>
</comment>
<keyword id="KW-0963">Cytoplasm</keyword>
<keyword id="KW-0342">GTP-binding</keyword>
<keyword id="KW-0396">Initiation factor</keyword>
<keyword id="KW-0547">Nucleotide-binding</keyword>
<keyword id="KW-0648">Protein biosynthesis</keyword>
<keyword id="KW-1185">Reference proteome</keyword>
<evidence type="ECO:0000250" key="1"/>
<evidence type="ECO:0000255" key="2">
    <source>
        <dbReference type="HAMAP-Rule" id="MF_00100"/>
    </source>
</evidence>
<evidence type="ECO:0000256" key="3">
    <source>
        <dbReference type="SAM" id="MobiDB-lite"/>
    </source>
</evidence>
<reference key="1">
    <citation type="journal article" date="2007" name="Genome Res.">
        <title>Genome sequence of a proteolytic (Group I) Clostridium botulinum strain Hall A and comparative analysis of the clostridial genomes.</title>
        <authorList>
            <person name="Sebaihia M."/>
            <person name="Peck M.W."/>
            <person name="Minton N.P."/>
            <person name="Thomson N.R."/>
            <person name="Holden M.T.G."/>
            <person name="Mitchell W.J."/>
            <person name="Carter A.T."/>
            <person name="Bentley S.D."/>
            <person name="Mason D.R."/>
            <person name="Crossman L."/>
            <person name="Paul C.J."/>
            <person name="Ivens A."/>
            <person name="Wells-Bennik M.H.J."/>
            <person name="Davis I.J."/>
            <person name="Cerdeno-Tarraga A.M."/>
            <person name="Churcher C."/>
            <person name="Quail M.A."/>
            <person name="Chillingworth T."/>
            <person name="Feltwell T."/>
            <person name="Fraser A."/>
            <person name="Goodhead I."/>
            <person name="Hance Z."/>
            <person name="Jagels K."/>
            <person name="Larke N."/>
            <person name="Maddison M."/>
            <person name="Moule S."/>
            <person name="Mungall K."/>
            <person name="Norbertczak H."/>
            <person name="Rabbinowitsch E."/>
            <person name="Sanders M."/>
            <person name="Simmonds M."/>
            <person name="White B."/>
            <person name="Whithead S."/>
            <person name="Parkhill J."/>
        </authorList>
    </citation>
    <scope>NUCLEOTIDE SEQUENCE [LARGE SCALE GENOMIC DNA]</scope>
    <source>
        <strain>Hall / ATCC 3502 / NCTC 13319 / Type A</strain>
    </source>
</reference>
<reference key="2">
    <citation type="journal article" date="2007" name="PLoS ONE">
        <title>Analysis of the neurotoxin complex genes in Clostridium botulinum A1-A4 and B1 strains: BoNT/A3, /Ba4 and /B1 clusters are located within plasmids.</title>
        <authorList>
            <person name="Smith T.J."/>
            <person name="Hill K.K."/>
            <person name="Foley B.T."/>
            <person name="Detter J.C."/>
            <person name="Munk A.C."/>
            <person name="Bruce D.C."/>
            <person name="Doggett N.A."/>
            <person name="Smith L.A."/>
            <person name="Marks J.D."/>
            <person name="Xie G."/>
            <person name="Brettin T.S."/>
        </authorList>
    </citation>
    <scope>NUCLEOTIDE SEQUENCE [LARGE SCALE GENOMIC DNA]</scope>
    <source>
        <strain>Hall / ATCC 3502 / NCTC 13319 / Type A</strain>
    </source>
</reference>
<feature type="chain" id="PRO_1000008230" description="Translation initiation factor IF-2">
    <location>
        <begin position="1"/>
        <end position="688"/>
    </location>
</feature>
<feature type="domain" description="tr-type G">
    <location>
        <begin position="187"/>
        <end position="354"/>
    </location>
</feature>
<feature type="region of interest" description="Disordered" evidence="3">
    <location>
        <begin position="53"/>
        <end position="100"/>
    </location>
</feature>
<feature type="region of interest" description="G1" evidence="1">
    <location>
        <begin position="196"/>
        <end position="203"/>
    </location>
</feature>
<feature type="region of interest" description="G2" evidence="1">
    <location>
        <begin position="221"/>
        <end position="225"/>
    </location>
</feature>
<feature type="region of interest" description="G3" evidence="1">
    <location>
        <begin position="242"/>
        <end position="245"/>
    </location>
</feature>
<feature type="region of interest" description="G4" evidence="1">
    <location>
        <begin position="296"/>
        <end position="299"/>
    </location>
</feature>
<feature type="region of interest" description="G5" evidence="1">
    <location>
        <begin position="332"/>
        <end position="334"/>
    </location>
</feature>
<feature type="compositionally biased region" description="Basic and acidic residues" evidence="3">
    <location>
        <begin position="53"/>
        <end position="62"/>
    </location>
</feature>
<feature type="compositionally biased region" description="Basic and acidic residues" evidence="3">
    <location>
        <begin position="86"/>
        <end position="95"/>
    </location>
</feature>
<feature type="binding site" evidence="2">
    <location>
        <begin position="196"/>
        <end position="203"/>
    </location>
    <ligand>
        <name>GTP</name>
        <dbReference type="ChEBI" id="CHEBI:37565"/>
    </ligand>
</feature>
<feature type="binding site" evidence="2">
    <location>
        <begin position="242"/>
        <end position="246"/>
    </location>
    <ligand>
        <name>GTP</name>
        <dbReference type="ChEBI" id="CHEBI:37565"/>
    </ligand>
</feature>
<feature type="binding site" evidence="2">
    <location>
        <begin position="296"/>
        <end position="299"/>
    </location>
    <ligand>
        <name>GTP</name>
        <dbReference type="ChEBI" id="CHEBI:37565"/>
    </ligand>
</feature>